<proteinExistence type="inferred from homology"/>
<sequence length="171" mass="19213">MKKPTSAPRSKAFGKQRRKTREELNQEARDRKRLKKHRGHAPGSRAAGGNSASGGGNQNQQKDPRIGSKTPVPLGVTEKVTQQHKPKSEKPMLSPQAELDLLETDERLDALLERLEAGETLSAEDQAWVDAKLDRIDELMQKLGLSYDDDEEDDEEDEKQEDMMRLLRGGN</sequence>
<dbReference type="EMBL" id="CP001127">
    <property type="protein sequence ID" value="ACF91077.1"/>
    <property type="molecule type" value="Genomic_DNA"/>
</dbReference>
<dbReference type="RefSeq" id="WP_000743292.1">
    <property type="nucleotide sequence ID" value="NC_011094.1"/>
</dbReference>
<dbReference type="SMR" id="B4TPL3"/>
<dbReference type="KEGG" id="sew:SeSA_A4214"/>
<dbReference type="HOGENOM" id="CLU_094104_2_0_6"/>
<dbReference type="Proteomes" id="UP000001865">
    <property type="component" value="Chromosome"/>
</dbReference>
<dbReference type="GO" id="GO:0005096">
    <property type="term" value="F:GTPase activator activity"/>
    <property type="evidence" value="ECO:0007669"/>
    <property type="project" value="UniProtKB-KW"/>
</dbReference>
<dbReference type="GO" id="GO:0042254">
    <property type="term" value="P:ribosome biogenesis"/>
    <property type="evidence" value="ECO:0007669"/>
    <property type="project" value="UniProtKB-KW"/>
</dbReference>
<dbReference type="HAMAP" id="MF_01058">
    <property type="entry name" value="GAP_YihI"/>
    <property type="match status" value="1"/>
</dbReference>
<dbReference type="InterPro" id="IPR007336">
    <property type="entry name" value="YihI"/>
</dbReference>
<dbReference type="NCBIfam" id="NF003560">
    <property type="entry name" value="PRK05244.1-1"/>
    <property type="match status" value="1"/>
</dbReference>
<dbReference type="Pfam" id="PF04220">
    <property type="entry name" value="YihI"/>
    <property type="match status" value="1"/>
</dbReference>
<reference key="1">
    <citation type="journal article" date="2011" name="J. Bacteriol.">
        <title>Comparative genomics of 28 Salmonella enterica isolates: evidence for CRISPR-mediated adaptive sublineage evolution.</title>
        <authorList>
            <person name="Fricke W.F."/>
            <person name="Mammel M.K."/>
            <person name="McDermott P.F."/>
            <person name="Tartera C."/>
            <person name="White D.G."/>
            <person name="Leclerc J.E."/>
            <person name="Ravel J."/>
            <person name="Cebula T.A."/>
        </authorList>
    </citation>
    <scope>NUCLEOTIDE SEQUENCE [LARGE SCALE GENOMIC DNA]</scope>
    <source>
        <strain>CVM19633</strain>
    </source>
</reference>
<gene>
    <name evidence="1" type="primary">yihI</name>
    <name type="ordered locus">SeSA_A4214</name>
</gene>
<comment type="function">
    <text evidence="1">A GTPase-activating protein (GAP) that modifies Der/EngA GTPase function. May play a role in ribosome biogenesis.</text>
</comment>
<comment type="subunit">
    <text evidence="1">Interacts with Der.</text>
</comment>
<comment type="similarity">
    <text evidence="1">Belongs to the YihI family.</text>
</comment>
<protein>
    <recommendedName>
        <fullName evidence="1">Der GTPase-activating protein YihI</fullName>
    </recommendedName>
</protein>
<keyword id="KW-0343">GTPase activation</keyword>
<keyword id="KW-0690">Ribosome biogenesis</keyword>
<feature type="chain" id="PRO_1000136393" description="Der GTPase-activating protein YihI">
    <location>
        <begin position="1"/>
        <end position="171"/>
    </location>
</feature>
<feature type="region of interest" description="Disordered" evidence="2">
    <location>
        <begin position="1"/>
        <end position="99"/>
    </location>
</feature>
<feature type="region of interest" description="Disordered" evidence="2">
    <location>
        <begin position="145"/>
        <end position="171"/>
    </location>
</feature>
<feature type="compositionally biased region" description="Basic and acidic residues" evidence="2">
    <location>
        <begin position="20"/>
        <end position="30"/>
    </location>
</feature>
<feature type="compositionally biased region" description="Basic residues" evidence="2">
    <location>
        <begin position="31"/>
        <end position="40"/>
    </location>
</feature>
<feature type="compositionally biased region" description="Acidic residues" evidence="2">
    <location>
        <begin position="147"/>
        <end position="160"/>
    </location>
</feature>
<name>YIHI_SALSV</name>
<accession>B4TPL3</accession>
<evidence type="ECO:0000255" key="1">
    <source>
        <dbReference type="HAMAP-Rule" id="MF_01058"/>
    </source>
</evidence>
<evidence type="ECO:0000256" key="2">
    <source>
        <dbReference type="SAM" id="MobiDB-lite"/>
    </source>
</evidence>
<organism>
    <name type="scientific">Salmonella schwarzengrund (strain CVM19633)</name>
    <dbReference type="NCBI Taxonomy" id="439843"/>
    <lineage>
        <taxon>Bacteria</taxon>
        <taxon>Pseudomonadati</taxon>
        <taxon>Pseudomonadota</taxon>
        <taxon>Gammaproteobacteria</taxon>
        <taxon>Enterobacterales</taxon>
        <taxon>Enterobacteriaceae</taxon>
        <taxon>Salmonella</taxon>
    </lineage>
</organism>